<organism>
    <name type="scientific">Desulforudis audaxviator (strain MP104C)</name>
    <dbReference type="NCBI Taxonomy" id="477974"/>
    <lineage>
        <taxon>Bacteria</taxon>
        <taxon>Bacillati</taxon>
        <taxon>Bacillota</taxon>
        <taxon>Clostridia</taxon>
        <taxon>Thermoanaerobacterales</taxon>
        <taxon>Candidatus Desulforudaceae</taxon>
        <taxon>Candidatus Desulforudis</taxon>
    </lineage>
</organism>
<proteinExistence type="inferred from homology"/>
<comment type="function">
    <text evidence="1">Bidirectionally degrades single-stranded DNA into large acid-insoluble oligonucleotides, which are then degraded further into small acid-soluble oligonucleotides.</text>
</comment>
<comment type="catalytic activity">
    <reaction evidence="1">
        <text>Exonucleolytic cleavage in either 5'- to 3'- or 3'- to 5'-direction to yield nucleoside 5'-phosphates.</text>
        <dbReference type="EC" id="3.1.11.6"/>
    </reaction>
</comment>
<comment type="subunit">
    <text evidence="1">Heterooligomer composed of large and small subunits.</text>
</comment>
<comment type="subcellular location">
    <subcellularLocation>
        <location evidence="1">Cytoplasm</location>
    </subcellularLocation>
</comment>
<comment type="similarity">
    <text evidence="1">Belongs to the XseA family.</text>
</comment>
<name>EX7L_DESAP</name>
<reference key="1">
    <citation type="submission" date="2007-10" db="EMBL/GenBank/DDBJ databases">
        <title>Complete sequence of chromosome of Desulforudis audaxviator MP104C.</title>
        <authorList>
            <person name="Copeland A."/>
            <person name="Lucas S."/>
            <person name="Lapidus A."/>
            <person name="Barry K."/>
            <person name="Glavina del Rio T."/>
            <person name="Dalin E."/>
            <person name="Tice H."/>
            <person name="Bruce D."/>
            <person name="Pitluck S."/>
            <person name="Lowry S.R."/>
            <person name="Larimer F."/>
            <person name="Land M.L."/>
            <person name="Hauser L."/>
            <person name="Kyrpides N."/>
            <person name="Ivanova N.N."/>
            <person name="Richardson P."/>
        </authorList>
    </citation>
    <scope>NUCLEOTIDE SEQUENCE [LARGE SCALE GENOMIC DNA]</scope>
    <source>
        <strain>MP104C</strain>
    </source>
</reference>
<protein>
    <recommendedName>
        <fullName evidence="1">Exodeoxyribonuclease 7 large subunit</fullName>
        <ecNumber evidence="1">3.1.11.6</ecNumber>
    </recommendedName>
    <alternativeName>
        <fullName evidence="1">Exodeoxyribonuclease VII large subunit</fullName>
        <shortName evidence="1">Exonuclease VII large subunit</shortName>
    </alternativeName>
</protein>
<feature type="chain" id="PRO_1000122052" description="Exodeoxyribonuclease 7 large subunit">
    <location>
        <begin position="1"/>
        <end position="406"/>
    </location>
</feature>
<sequence length="406" mass="44417">MAREMRIVSVRELTGYIKERLESDPFLAHVWVRGEVSACTRHPSGHLYFFLKDEAARIRVVMFRSQVSRLGVPLENGTTVVVRGYLGVYERNGEYQLYAQGAEAEGAGKLHAALERLKEKLQREGLFDPARKRALPALPDTVGVVTSPVGAALKDILTIMRRRWPPARVLLAPVSVQGETAPYEIAQAIRALNGAGGVDVIIVGRGGGAPEELAAFNTEVVARAIFESRIPVVSAVGHEKDVTVADLVADWRAPTPSAAAEAVVPDQRAVRERLAAVESRLGRAVRHRLAVYRVRLEALRQRPVMASPGVLCRRRREVVRSLEERLGGAIGRRTGEGRSRLAVLSGRLEALSPLQVLARGYSICRRADGRIVRDADGVSPGERVIIWLHAGGLSCLVEETFPSRNP</sequence>
<accession>B1I3J0</accession>
<evidence type="ECO:0000255" key="1">
    <source>
        <dbReference type="HAMAP-Rule" id="MF_00378"/>
    </source>
</evidence>
<dbReference type="EC" id="3.1.11.6" evidence="1"/>
<dbReference type="EMBL" id="CP000860">
    <property type="protein sequence ID" value="ACA59533.1"/>
    <property type="molecule type" value="Genomic_DNA"/>
</dbReference>
<dbReference type="SMR" id="B1I3J0"/>
<dbReference type="STRING" id="477974.Daud_1021"/>
<dbReference type="KEGG" id="dau:Daud_1021"/>
<dbReference type="eggNOG" id="COG1570">
    <property type="taxonomic scope" value="Bacteria"/>
</dbReference>
<dbReference type="HOGENOM" id="CLU_023625_3_1_9"/>
<dbReference type="OrthoDB" id="9802795at2"/>
<dbReference type="Proteomes" id="UP000008544">
    <property type="component" value="Chromosome"/>
</dbReference>
<dbReference type="GO" id="GO:0005737">
    <property type="term" value="C:cytoplasm"/>
    <property type="evidence" value="ECO:0007669"/>
    <property type="project" value="UniProtKB-SubCell"/>
</dbReference>
<dbReference type="GO" id="GO:0009318">
    <property type="term" value="C:exodeoxyribonuclease VII complex"/>
    <property type="evidence" value="ECO:0007669"/>
    <property type="project" value="InterPro"/>
</dbReference>
<dbReference type="GO" id="GO:0008855">
    <property type="term" value="F:exodeoxyribonuclease VII activity"/>
    <property type="evidence" value="ECO:0007669"/>
    <property type="project" value="UniProtKB-UniRule"/>
</dbReference>
<dbReference type="GO" id="GO:0003676">
    <property type="term" value="F:nucleic acid binding"/>
    <property type="evidence" value="ECO:0007669"/>
    <property type="project" value="InterPro"/>
</dbReference>
<dbReference type="GO" id="GO:0006308">
    <property type="term" value="P:DNA catabolic process"/>
    <property type="evidence" value="ECO:0007669"/>
    <property type="project" value="UniProtKB-UniRule"/>
</dbReference>
<dbReference type="CDD" id="cd04489">
    <property type="entry name" value="ExoVII_LU_OBF"/>
    <property type="match status" value="1"/>
</dbReference>
<dbReference type="HAMAP" id="MF_00378">
    <property type="entry name" value="Exonuc_7_L"/>
    <property type="match status" value="1"/>
</dbReference>
<dbReference type="InterPro" id="IPR003753">
    <property type="entry name" value="Exonuc_VII_L"/>
</dbReference>
<dbReference type="InterPro" id="IPR020579">
    <property type="entry name" value="Exonuc_VII_lsu_C"/>
</dbReference>
<dbReference type="InterPro" id="IPR025824">
    <property type="entry name" value="OB-fold_nuc-bd_dom"/>
</dbReference>
<dbReference type="NCBIfam" id="TIGR00237">
    <property type="entry name" value="xseA"/>
    <property type="match status" value="1"/>
</dbReference>
<dbReference type="PANTHER" id="PTHR30008">
    <property type="entry name" value="EXODEOXYRIBONUCLEASE 7 LARGE SUBUNIT"/>
    <property type="match status" value="1"/>
</dbReference>
<dbReference type="PANTHER" id="PTHR30008:SF0">
    <property type="entry name" value="EXODEOXYRIBONUCLEASE 7 LARGE SUBUNIT"/>
    <property type="match status" value="1"/>
</dbReference>
<dbReference type="Pfam" id="PF02601">
    <property type="entry name" value="Exonuc_VII_L"/>
    <property type="match status" value="2"/>
</dbReference>
<dbReference type="Pfam" id="PF13742">
    <property type="entry name" value="tRNA_anti_2"/>
    <property type="match status" value="1"/>
</dbReference>
<keyword id="KW-0963">Cytoplasm</keyword>
<keyword id="KW-0269">Exonuclease</keyword>
<keyword id="KW-0378">Hydrolase</keyword>
<keyword id="KW-0540">Nuclease</keyword>
<keyword id="KW-1185">Reference proteome</keyword>
<gene>
    <name evidence="1" type="primary">xseA</name>
    <name type="ordered locus">Daud_1021</name>
</gene>